<evidence type="ECO:0000255" key="1">
    <source>
        <dbReference type="HAMAP-Rule" id="MF_01363"/>
    </source>
</evidence>
<evidence type="ECO:0000305" key="2"/>
<proteinExistence type="inferred from homology"/>
<protein>
    <recommendedName>
        <fullName evidence="1">Large ribosomal subunit protein bL21</fullName>
    </recommendedName>
    <alternativeName>
        <fullName evidence="2">50S ribosomal protein L21</fullName>
    </alternativeName>
</protein>
<comment type="function">
    <text evidence="1">This protein binds to 23S rRNA in the presence of protein L20.</text>
</comment>
<comment type="subunit">
    <text evidence="1">Part of the 50S ribosomal subunit. Contacts protein L20.</text>
</comment>
<comment type="similarity">
    <text evidence="1">Belongs to the bacterial ribosomal protein bL21 family.</text>
</comment>
<gene>
    <name evidence="1" type="primary">rplU</name>
    <name type="ordered locus">SZO_08370</name>
</gene>
<name>RL21_STRS7</name>
<feature type="chain" id="PRO_1000214902" description="Large ribosomal subunit protein bL21">
    <location>
        <begin position="1"/>
        <end position="104"/>
    </location>
</feature>
<accession>C0ME74</accession>
<reference key="1">
    <citation type="journal article" date="2009" name="PLoS Pathog.">
        <title>Genomic evidence for the evolution of Streptococcus equi: host restriction, increased virulence, and genetic exchange with human pathogens.</title>
        <authorList>
            <person name="Holden M.T.G."/>
            <person name="Heather Z."/>
            <person name="Paillot R."/>
            <person name="Steward K.F."/>
            <person name="Webb K."/>
            <person name="Ainslie F."/>
            <person name="Jourdan T."/>
            <person name="Bason N.C."/>
            <person name="Holroyd N.E."/>
            <person name="Mungall K."/>
            <person name="Quail M.A."/>
            <person name="Sanders M."/>
            <person name="Simmonds M."/>
            <person name="Willey D."/>
            <person name="Brooks K."/>
            <person name="Aanensen D.M."/>
            <person name="Spratt B.G."/>
            <person name="Jolley K.A."/>
            <person name="Maiden M.C.J."/>
            <person name="Kehoe M."/>
            <person name="Chanter N."/>
            <person name="Bentley S.D."/>
            <person name="Robinson C."/>
            <person name="Maskell D.J."/>
            <person name="Parkhill J."/>
            <person name="Waller A.S."/>
        </authorList>
    </citation>
    <scope>NUCLEOTIDE SEQUENCE [LARGE SCALE GENOMIC DNA]</scope>
    <source>
        <strain>H70</strain>
    </source>
</reference>
<dbReference type="EMBL" id="FM204884">
    <property type="protein sequence ID" value="CAW99025.1"/>
    <property type="molecule type" value="Genomic_DNA"/>
</dbReference>
<dbReference type="SMR" id="C0ME74"/>
<dbReference type="KEGG" id="seq:SZO_08370"/>
<dbReference type="eggNOG" id="COG0261">
    <property type="taxonomic scope" value="Bacteria"/>
</dbReference>
<dbReference type="HOGENOM" id="CLU_061463_3_1_9"/>
<dbReference type="Proteomes" id="UP000001368">
    <property type="component" value="Chromosome"/>
</dbReference>
<dbReference type="GO" id="GO:0005737">
    <property type="term" value="C:cytoplasm"/>
    <property type="evidence" value="ECO:0007669"/>
    <property type="project" value="UniProtKB-ARBA"/>
</dbReference>
<dbReference type="GO" id="GO:1990904">
    <property type="term" value="C:ribonucleoprotein complex"/>
    <property type="evidence" value="ECO:0007669"/>
    <property type="project" value="UniProtKB-KW"/>
</dbReference>
<dbReference type="GO" id="GO:0005840">
    <property type="term" value="C:ribosome"/>
    <property type="evidence" value="ECO:0007669"/>
    <property type="project" value="UniProtKB-KW"/>
</dbReference>
<dbReference type="GO" id="GO:0019843">
    <property type="term" value="F:rRNA binding"/>
    <property type="evidence" value="ECO:0007669"/>
    <property type="project" value="UniProtKB-UniRule"/>
</dbReference>
<dbReference type="GO" id="GO:0003735">
    <property type="term" value="F:structural constituent of ribosome"/>
    <property type="evidence" value="ECO:0007669"/>
    <property type="project" value="InterPro"/>
</dbReference>
<dbReference type="GO" id="GO:0006412">
    <property type="term" value="P:translation"/>
    <property type="evidence" value="ECO:0007669"/>
    <property type="project" value="UniProtKB-UniRule"/>
</dbReference>
<dbReference type="HAMAP" id="MF_01363">
    <property type="entry name" value="Ribosomal_bL21"/>
    <property type="match status" value="1"/>
</dbReference>
<dbReference type="InterPro" id="IPR028909">
    <property type="entry name" value="bL21-like"/>
</dbReference>
<dbReference type="InterPro" id="IPR036164">
    <property type="entry name" value="bL21-like_sf"/>
</dbReference>
<dbReference type="InterPro" id="IPR001787">
    <property type="entry name" value="Ribosomal_bL21"/>
</dbReference>
<dbReference type="InterPro" id="IPR018258">
    <property type="entry name" value="Ribosomal_bL21_CS"/>
</dbReference>
<dbReference type="NCBIfam" id="TIGR00061">
    <property type="entry name" value="L21"/>
    <property type="match status" value="1"/>
</dbReference>
<dbReference type="PANTHER" id="PTHR21349">
    <property type="entry name" value="50S RIBOSOMAL PROTEIN L21"/>
    <property type="match status" value="1"/>
</dbReference>
<dbReference type="PANTHER" id="PTHR21349:SF0">
    <property type="entry name" value="LARGE RIBOSOMAL SUBUNIT PROTEIN BL21M"/>
    <property type="match status" value="1"/>
</dbReference>
<dbReference type="Pfam" id="PF00829">
    <property type="entry name" value="Ribosomal_L21p"/>
    <property type="match status" value="1"/>
</dbReference>
<dbReference type="SUPFAM" id="SSF141091">
    <property type="entry name" value="L21p-like"/>
    <property type="match status" value="1"/>
</dbReference>
<dbReference type="PROSITE" id="PS01169">
    <property type="entry name" value="RIBOSOMAL_L21"/>
    <property type="match status" value="1"/>
</dbReference>
<organism>
    <name type="scientific">Streptococcus equi subsp. zooepidemicus (strain H70)</name>
    <dbReference type="NCBI Taxonomy" id="553483"/>
    <lineage>
        <taxon>Bacteria</taxon>
        <taxon>Bacillati</taxon>
        <taxon>Bacillota</taxon>
        <taxon>Bacilli</taxon>
        <taxon>Lactobacillales</taxon>
        <taxon>Streptococcaceae</taxon>
        <taxon>Streptococcus</taxon>
    </lineage>
</organism>
<keyword id="KW-0687">Ribonucleoprotein</keyword>
<keyword id="KW-0689">Ribosomal protein</keyword>
<keyword id="KW-0694">RNA-binding</keyword>
<keyword id="KW-0699">rRNA-binding</keyword>
<sequence length="104" mass="11183">MSTYAIIKTGGKQVKVEVGQAIYVEKIDAEAGAEITFNEVVLVGGDKTVVGTPVVEGATVVGTVEKQGKQKKVVTFKYKPKKGSHRKQGHRQPYTKVVINAIKA</sequence>